<evidence type="ECO:0000255" key="1">
    <source>
        <dbReference type="HAMAP-Rule" id="MF_00213"/>
    </source>
</evidence>
<name>HYPA_CHLL2</name>
<feature type="chain" id="PRO_1000099887" description="Hydrogenase maturation factor HypA">
    <location>
        <begin position="1"/>
        <end position="116"/>
    </location>
</feature>
<feature type="binding site" evidence="1">
    <location>
        <position position="2"/>
    </location>
    <ligand>
        <name>Ni(2+)</name>
        <dbReference type="ChEBI" id="CHEBI:49786"/>
    </ligand>
</feature>
<feature type="binding site" evidence="1">
    <location>
        <position position="73"/>
    </location>
    <ligand>
        <name>Zn(2+)</name>
        <dbReference type="ChEBI" id="CHEBI:29105"/>
    </ligand>
</feature>
<feature type="binding site" evidence="1">
    <location>
        <position position="76"/>
    </location>
    <ligand>
        <name>Zn(2+)</name>
        <dbReference type="ChEBI" id="CHEBI:29105"/>
    </ligand>
</feature>
<feature type="binding site" evidence="1">
    <location>
        <position position="89"/>
    </location>
    <ligand>
        <name>Zn(2+)</name>
        <dbReference type="ChEBI" id="CHEBI:29105"/>
    </ligand>
</feature>
<feature type="binding site" evidence="1">
    <location>
        <position position="92"/>
    </location>
    <ligand>
        <name>Zn(2+)</name>
        <dbReference type="ChEBI" id="CHEBI:29105"/>
    </ligand>
</feature>
<dbReference type="EMBL" id="CP001097">
    <property type="protein sequence ID" value="ACD90826.1"/>
    <property type="molecule type" value="Genomic_DNA"/>
</dbReference>
<dbReference type="RefSeq" id="WP_012466699.1">
    <property type="nucleotide sequence ID" value="NC_010803.1"/>
</dbReference>
<dbReference type="SMR" id="B3EEL6"/>
<dbReference type="STRING" id="290315.Clim_1787"/>
<dbReference type="KEGG" id="cli:Clim_1787"/>
<dbReference type="eggNOG" id="COG0375">
    <property type="taxonomic scope" value="Bacteria"/>
</dbReference>
<dbReference type="HOGENOM" id="CLU_126929_0_0_10"/>
<dbReference type="OrthoDB" id="9800361at2"/>
<dbReference type="Proteomes" id="UP000008841">
    <property type="component" value="Chromosome"/>
</dbReference>
<dbReference type="GO" id="GO:0016151">
    <property type="term" value="F:nickel cation binding"/>
    <property type="evidence" value="ECO:0007669"/>
    <property type="project" value="UniProtKB-UniRule"/>
</dbReference>
<dbReference type="GO" id="GO:0008270">
    <property type="term" value="F:zinc ion binding"/>
    <property type="evidence" value="ECO:0007669"/>
    <property type="project" value="UniProtKB-UniRule"/>
</dbReference>
<dbReference type="GO" id="GO:0051604">
    <property type="term" value="P:protein maturation"/>
    <property type="evidence" value="ECO:0007669"/>
    <property type="project" value="InterPro"/>
</dbReference>
<dbReference type="GO" id="GO:0036211">
    <property type="term" value="P:protein modification process"/>
    <property type="evidence" value="ECO:0007669"/>
    <property type="project" value="UniProtKB-UniRule"/>
</dbReference>
<dbReference type="Gene3D" id="3.30.2320.80">
    <property type="match status" value="1"/>
</dbReference>
<dbReference type="HAMAP" id="MF_00213">
    <property type="entry name" value="HypA_HybF"/>
    <property type="match status" value="1"/>
</dbReference>
<dbReference type="InterPro" id="IPR020538">
    <property type="entry name" value="Hydgase_Ni_incorp_HypA/HybF_CS"/>
</dbReference>
<dbReference type="InterPro" id="IPR000688">
    <property type="entry name" value="HypA/HybF"/>
</dbReference>
<dbReference type="NCBIfam" id="TIGR00100">
    <property type="entry name" value="hypA"/>
    <property type="match status" value="1"/>
</dbReference>
<dbReference type="PANTHER" id="PTHR34535">
    <property type="entry name" value="HYDROGENASE MATURATION FACTOR HYPA"/>
    <property type="match status" value="1"/>
</dbReference>
<dbReference type="PANTHER" id="PTHR34535:SF3">
    <property type="entry name" value="HYDROGENASE MATURATION FACTOR HYPA"/>
    <property type="match status" value="1"/>
</dbReference>
<dbReference type="Pfam" id="PF01155">
    <property type="entry name" value="HypA"/>
    <property type="match status" value="1"/>
</dbReference>
<dbReference type="PIRSF" id="PIRSF004761">
    <property type="entry name" value="Hydrgn_mat_HypA"/>
    <property type="match status" value="1"/>
</dbReference>
<dbReference type="PROSITE" id="PS01249">
    <property type="entry name" value="HYPA"/>
    <property type="match status" value="1"/>
</dbReference>
<keyword id="KW-0479">Metal-binding</keyword>
<keyword id="KW-0533">Nickel</keyword>
<keyword id="KW-0862">Zinc</keyword>
<organism>
    <name type="scientific">Chlorobium limicola (strain DSM 245 / NBRC 103803 / 6330)</name>
    <dbReference type="NCBI Taxonomy" id="290315"/>
    <lineage>
        <taxon>Bacteria</taxon>
        <taxon>Pseudomonadati</taxon>
        <taxon>Chlorobiota</taxon>
        <taxon>Chlorobiia</taxon>
        <taxon>Chlorobiales</taxon>
        <taxon>Chlorobiaceae</taxon>
        <taxon>Chlorobium/Pelodictyon group</taxon>
        <taxon>Chlorobium</taxon>
    </lineage>
</organism>
<proteinExistence type="inferred from homology"/>
<sequence>MHEMSIALSIVDAVDAQARVEGAGRISRVELVIGRLAGIEPESLRFCFPAAATGTLAEGAELDIEEIAAVAVCGACGFRFSVTFPVAECPECRSLRISVVSGEEFVIRSITIEEGD</sequence>
<comment type="function">
    <text evidence="1">Involved in the maturation of [NiFe] hydrogenases. Required for nickel insertion into the metal center of the hydrogenase.</text>
</comment>
<comment type="similarity">
    <text evidence="1">Belongs to the HypA/HybF family.</text>
</comment>
<reference key="1">
    <citation type="submission" date="2008-05" db="EMBL/GenBank/DDBJ databases">
        <title>Complete sequence of Chlorobium limicola DSM 245.</title>
        <authorList>
            <consortium name="US DOE Joint Genome Institute"/>
            <person name="Lucas S."/>
            <person name="Copeland A."/>
            <person name="Lapidus A."/>
            <person name="Glavina del Rio T."/>
            <person name="Dalin E."/>
            <person name="Tice H."/>
            <person name="Bruce D."/>
            <person name="Goodwin L."/>
            <person name="Pitluck S."/>
            <person name="Schmutz J."/>
            <person name="Larimer F."/>
            <person name="Land M."/>
            <person name="Hauser L."/>
            <person name="Kyrpides N."/>
            <person name="Ovchinnikova G."/>
            <person name="Zhao F."/>
            <person name="Li T."/>
            <person name="Liu Z."/>
            <person name="Overmann J."/>
            <person name="Bryant D.A."/>
            <person name="Richardson P."/>
        </authorList>
    </citation>
    <scope>NUCLEOTIDE SEQUENCE [LARGE SCALE GENOMIC DNA]</scope>
    <source>
        <strain>DSM 245 / NBRC 103803 / 6330</strain>
    </source>
</reference>
<gene>
    <name evidence="1" type="primary">hypA</name>
    <name type="ordered locus">Clim_1787</name>
</gene>
<protein>
    <recommendedName>
        <fullName evidence="1">Hydrogenase maturation factor HypA</fullName>
    </recommendedName>
</protein>
<accession>B3EEL6</accession>